<reference key="1">
    <citation type="journal article" date="2004" name="Nat. Genet.">
        <title>Comparison of genome degradation in Paratyphi A and Typhi, human-restricted serovars of Salmonella enterica that cause typhoid.</title>
        <authorList>
            <person name="McClelland M."/>
            <person name="Sanderson K.E."/>
            <person name="Clifton S.W."/>
            <person name="Latreille P."/>
            <person name="Porwollik S."/>
            <person name="Sabo A."/>
            <person name="Meyer R."/>
            <person name="Bieri T."/>
            <person name="Ozersky P."/>
            <person name="McLellan M."/>
            <person name="Harkins C.R."/>
            <person name="Wang C."/>
            <person name="Nguyen C."/>
            <person name="Berghoff A."/>
            <person name="Elliott G."/>
            <person name="Kohlberg S."/>
            <person name="Strong C."/>
            <person name="Du F."/>
            <person name="Carter J."/>
            <person name="Kremizki C."/>
            <person name="Layman D."/>
            <person name="Leonard S."/>
            <person name="Sun H."/>
            <person name="Fulton L."/>
            <person name="Nash W."/>
            <person name="Miner T."/>
            <person name="Minx P."/>
            <person name="Delehaunty K."/>
            <person name="Fronick C."/>
            <person name="Magrini V."/>
            <person name="Nhan M."/>
            <person name="Warren W."/>
            <person name="Florea L."/>
            <person name="Spieth J."/>
            <person name="Wilson R.K."/>
        </authorList>
    </citation>
    <scope>NUCLEOTIDE SEQUENCE [LARGE SCALE GENOMIC DNA]</scope>
    <source>
        <strain>ATCC 9150 / SARB42</strain>
    </source>
</reference>
<name>BIOH_SALPA</name>
<keyword id="KW-0093">Biotin biosynthesis</keyword>
<keyword id="KW-0963">Cytoplasm</keyword>
<keyword id="KW-0378">Hydrolase</keyword>
<keyword id="KW-0719">Serine esterase</keyword>
<feature type="chain" id="PRO_0000204489" description="Pimeloyl-[acyl-carrier protein] methyl ester esterase">
    <location>
        <begin position="1"/>
        <end position="256"/>
    </location>
</feature>
<feature type="domain" description="AB hydrolase-1" evidence="1">
    <location>
        <begin position="15"/>
        <end position="242"/>
    </location>
</feature>
<feature type="active site" description="Nucleophile" evidence="2">
    <location>
        <position position="82"/>
    </location>
</feature>
<feature type="active site" evidence="2">
    <location>
        <position position="207"/>
    </location>
</feature>
<feature type="active site" evidence="2">
    <location>
        <position position="235"/>
    </location>
</feature>
<feature type="binding site" evidence="2">
    <location>
        <position position="22"/>
    </location>
    <ligand>
        <name>substrate</name>
    </ligand>
</feature>
<feature type="binding site" evidence="2">
    <location>
        <begin position="82"/>
        <end position="83"/>
    </location>
    <ligand>
        <name>substrate</name>
    </ligand>
</feature>
<feature type="binding site" evidence="2">
    <location>
        <begin position="143"/>
        <end position="147"/>
    </location>
    <ligand>
        <name>substrate</name>
    </ligand>
</feature>
<feature type="binding site" evidence="2">
    <location>
        <position position="235"/>
    </location>
    <ligand>
        <name>substrate</name>
    </ligand>
</feature>
<organism>
    <name type="scientific">Salmonella paratyphi A (strain ATCC 9150 / SARB42)</name>
    <dbReference type="NCBI Taxonomy" id="295319"/>
    <lineage>
        <taxon>Bacteria</taxon>
        <taxon>Pseudomonadati</taxon>
        <taxon>Pseudomonadota</taxon>
        <taxon>Gammaproteobacteria</taxon>
        <taxon>Enterobacterales</taxon>
        <taxon>Enterobacteriaceae</taxon>
        <taxon>Salmonella</taxon>
    </lineage>
</organism>
<accession>Q5PLY8</accession>
<dbReference type="EC" id="3.1.1.85" evidence="2"/>
<dbReference type="EMBL" id="CP000026">
    <property type="protein sequence ID" value="AAV79187.1"/>
    <property type="molecule type" value="Genomic_DNA"/>
</dbReference>
<dbReference type="RefSeq" id="WP_000998145.1">
    <property type="nucleotide sequence ID" value="NC_006511.1"/>
</dbReference>
<dbReference type="SMR" id="Q5PLY8"/>
<dbReference type="ESTHER" id="salty-BIOH">
    <property type="family name" value="BioH"/>
</dbReference>
<dbReference type="KEGG" id="spt:SPA3374"/>
<dbReference type="HOGENOM" id="CLU_020336_12_2_6"/>
<dbReference type="UniPathway" id="UPA00078"/>
<dbReference type="Proteomes" id="UP000008185">
    <property type="component" value="Chromosome"/>
</dbReference>
<dbReference type="GO" id="GO:0005737">
    <property type="term" value="C:cytoplasm"/>
    <property type="evidence" value="ECO:0007669"/>
    <property type="project" value="UniProtKB-SubCell"/>
</dbReference>
<dbReference type="GO" id="GO:0090499">
    <property type="term" value="F:pimelyl-[acyl-carrier protein] methyl ester esterase activity"/>
    <property type="evidence" value="ECO:0007669"/>
    <property type="project" value="UniProtKB-EC"/>
</dbReference>
<dbReference type="GO" id="GO:0009102">
    <property type="term" value="P:biotin biosynthetic process"/>
    <property type="evidence" value="ECO:0007669"/>
    <property type="project" value="UniProtKB-UniRule"/>
</dbReference>
<dbReference type="FunFam" id="3.40.50.1820:FF:000045">
    <property type="entry name" value="Pimeloyl-[acyl-carrier protein] methyl ester esterase"/>
    <property type="match status" value="1"/>
</dbReference>
<dbReference type="Gene3D" id="3.40.50.1820">
    <property type="entry name" value="alpha/beta hydrolase"/>
    <property type="match status" value="1"/>
</dbReference>
<dbReference type="HAMAP" id="MF_01260">
    <property type="entry name" value="Carboxylester"/>
    <property type="match status" value="1"/>
</dbReference>
<dbReference type="InterPro" id="IPR000073">
    <property type="entry name" value="AB_hydrolase_1"/>
</dbReference>
<dbReference type="InterPro" id="IPR029058">
    <property type="entry name" value="AB_hydrolase_fold"/>
</dbReference>
<dbReference type="InterPro" id="IPR010076">
    <property type="entry name" value="BioH"/>
</dbReference>
<dbReference type="InterPro" id="IPR050228">
    <property type="entry name" value="Carboxylesterase_BioH"/>
</dbReference>
<dbReference type="NCBIfam" id="TIGR01738">
    <property type="entry name" value="bioH"/>
    <property type="match status" value="1"/>
</dbReference>
<dbReference type="NCBIfam" id="NF007674">
    <property type="entry name" value="PRK10349.1"/>
    <property type="match status" value="1"/>
</dbReference>
<dbReference type="PANTHER" id="PTHR43194">
    <property type="entry name" value="HYDROLASE ALPHA/BETA FOLD FAMILY"/>
    <property type="match status" value="1"/>
</dbReference>
<dbReference type="PANTHER" id="PTHR43194:SF5">
    <property type="entry name" value="PIMELOYL-[ACYL-CARRIER PROTEIN] METHYL ESTER ESTERASE"/>
    <property type="match status" value="1"/>
</dbReference>
<dbReference type="Pfam" id="PF00561">
    <property type="entry name" value="Abhydrolase_1"/>
    <property type="match status" value="1"/>
</dbReference>
<dbReference type="SUPFAM" id="SSF53474">
    <property type="entry name" value="alpha/beta-Hydrolases"/>
    <property type="match status" value="1"/>
</dbReference>
<comment type="function">
    <text evidence="2">The physiological role of BioH is to remove the methyl group introduced by BioC when the pimeloyl moiety is complete. It allows to synthesize pimeloyl-ACP via the fatty acid synthetic pathway through the hydrolysis of the ester bonds of pimeloyl-ACP esters.</text>
</comment>
<comment type="catalytic activity">
    <reaction evidence="2">
        <text>6-carboxyhexanoyl-[ACP] methyl ester + H2O = 6-carboxyhexanoyl-[ACP] + methanol + H(+)</text>
        <dbReference type="Rhea" id="RHEA:42700"/>
        <dbReference type="Rhea" id="RHEA-COMP:9955"/>
        <dbReference type="Rhea" id="RHEA-COMP:10186"/>
        <dbReference type="ChEBI" id="CHEBI:15377"/>
        <dbReference type="ChEBI" id="CHEBI:15378"/>
        <dbReference type="ChEBI" id="CHEBI:17790"/>
        <dbReference type="ChEBI" id="CHEBI:78846"/>
        <dbReference type="ChEBI" id="CHEBI:82735"/>
        <dbReference type="EC" id="3.1.1.85"/>
    </reaction>
</comment>
<comment type="pathway">
    <text evidence="2">Cofactor biosynthesis; biotin biosynthesis.</text>
</comment>
<comment type="subunit">
    <text evidence="2">Monomer.</text>
</comment>
<comment type="subcellular location">
    <subcellularLocation>
        <location evidence="2">Cytoplasm</location>
    </subcellularLocation>
</comment>
<comment type="similarity">
    <text evidence="2">Belongs to the AB hydrolase superfamily. Carboxylesterase BioH family.</text>
</comment>
<gene>
    <name evidence="2" type="primary">bioH</name>
    <name type="ordered locus">SPA3374</name>
</gene>
<sequence length="256" mass="28241">MNDIWWQTYGEGNCHLVLLHGWGLNAEVWHCIREELGSHFTLHLVDLPGYGRSSGFGAMTLEEMTAQVAKNAPDQAIWLGWSLGGLVASQMALTHPERVQALVTVASSPCFSAREGWPGIKPEILGGFQQQLSDDFQRTVERFLALQTLGTETARQDARTLKSVVLAQPMPDVEVLNGGLEILKTVDLREALKNVNMPFLRLYGYLDGLVPRKIAPLLDTLWPHSTSQIMAKAAHAPFISHPAAFCQALMTLKSSL</sequence>
<proteinExistence type="inferred from homology"/>
<protein>
    <recommendedName>
        <fullName evidence="2">Pimeloyl-[acyl-carrier protein] methyl ester esterase</fullName>
        <ecNumber evidence="2">3.1.1.85</ecNumber>
    </recommendedName>
    <alternativeName>
        <fullName evidence="2">Biotin synthesis protein BioH</fullName>
    </alternativeName>
    <alternativeName>
        <fullName evidence="2">Carboxylesterase BioH</fullName>
    </alternativeName>
</protein>
<evidence type="ECO:0000255" key="1"/>
<evidence type="ECO:0000255" key="2">
    <source>
        <dbReference type="HAMAP-Rule" id="MF_01260"/>
    </source>
</evidence>